<proteinExistence type="inferred from homology"/>
<sequence>MPIQNSPYQGFATLLNSSGHSVSPAELHGLLLGRSCAGAGFNAEEWLIDAAELLESEPQDNVRNALIGLQEMVKSELTGDDVTVVLLLPNDDAPLAERAAALGEWCQGFLTGFGLNCRDSSMLSTEATEVLQDLAAISQVQDALEESEDGESDYMEVMEYLRVAPLLLFSETKKADVPPAAKPSLH</sequence>
<feature type="chain" id="PRO_1000013048" description="UPF0149 protein Pfl01_5435">
    <location>
        <begin position="1"/>
        <end position="186"/>
    </location>
</feature>
<protein>
    <recommendedName>
        <fullName evidence="1">UPF0149 protein Pfl01_5435</fullName>
    </recommendedName>
</protein>
<gene>
    <name type="ordered locus">Pfl01_5435</name>
</gene>
<comment type="similarity">
    <text evidence="1">Belongs to the UPF0149 family.</text>
</comment>
<evidence type="ECO:0000255" key="1">
    <source>
        <dbReference type="HAMAP-Rule" id="MF_00346"/>
    </source>
</evidence>
<name>Y5435_PSEPF</name>
<organism>
    <name type="scientific">Pseudomonas fluorescens (strain Pf0-1)</name>
    <dbReference type="NCBI Taxonomy" id="205922"/>
    <lineage>
        <taxon>Bacteria</taxon>
        <taxon>Pseudomonadati</taxon>
        <taxon>Pseudomonadota</taxon>
        <taxon>Gammaproteobacteria</taxon>
        <taxon>Pseudomonadales</taxon>
        <taxon>Pseudomonadaceae</taxon>
        <taxon>Pseudomonas</taxon>
    </lineage>
</organism>
<reference key="1">
    <citation type="journal article" date="2009" name="Genome Biol.">
        <title>Genomic and genetic analyses of diversity and plant interactions of Pseudomonas fluorescens.</title>
        <authorList>
            <person name="Silby M.W."/>
            <person name="Cerdeno-Tarraga A.M."/>
            <person name="Vernikos G.S."/>
            <person name="Giddens S.R."/>
            <person name="Jackson R.W."/>
            <person name="Preston G.M."/>
            <person name="Zhang X.-X."/>
            <person name="Moon C.D."/>
            <person name="Gehrig S.M."/>
            <person name="Godfrey S.A.C."/>
            <person name="Knight C.G."/>
            <person name="Malone J.G."/>
            <person name="Robinson Z."/>
            <person name="Spiers A.J."/>
            <person name="Harris S."/>
            <person name="Challis G.L."/>
            <person name="Yaxley A.M."/>
            <person name="Harris D."/>
            <person name="Seeger K."/>
            <person name="Murphy L."/>
            <person name="Rutter S."/>
            <person name="Squares R."/>
            <person name="Quail M.A."/>
            <person name="Saunders E."/>
            <person name="Mavromatis K."/>
            <person name="Brettin T.S."/>
            <person name="Bentley S.D."/>
            <person name="Hothersall J."/>
            <person name="Stephens E."/>
            <person name="Thomas C.M."/>
            <person name="Parkhill J."/>
            <person name="Levy S.B."/>
            <person name="Rainey P.B."/>
            <person name="Thomson N.R."/>
        </authorList>
    </citation>
    <scope>NUCLEOTIDE SEQUENCE [LARGE SCALE GENOMIC DNA]</scope>
    <source>
        <strain>Pf0-1</strain>
    </source>
</reference>
<dbReference type="EMBL" id="CP000094">
    <property type="protein sequence ID" value="ABA77172.1"/>
    <property type="molecule type" value="Genomic_DNA"/>
</dbReference>
<dbReference type="RefSeq" id="WP_007951810.1">
    <property type="nucleotide sequence ID" value="NC_007492.2"/>
</dbReference>
<dbReference type="SMR" id="Q3K4Y2"/>
<dbReference type="KEGG" id="pfo:Pfl01_5435"/>
<dbReference type="eggNOG" id="COG3079">
    <property type="taxonomic scope" value="Bacteria"/>
</dbReference>
<dbReference type="HOGENOM" id="CLU_085336_0_0_6"/>
<dbReference type="Proteomes" id="UP000002704">
    <property type="component" value="Chromosome"/>
</dbReference>
<dbReference type="GO" id="GO:0005829">
    <property type="term" value="C:cytosol"/>
    <property type="evidence" value="ECO:0007669"/>
    <property type="project" value="TreeGrafter"/>
</dbReference>
<dbReference type="Gene3D" id="1.20.120.740">
    <property type="entry name" value="YgfB uncharacterised protein family UPF0149, PF03695"/>
    <property type="match status" value="1"/>
</dbReference>
<dbReference type="HAMAP" id="MF_00346">
    <property type="entry name" value="UPF0149"/>
    <property type="match status" value="1"/>
</dbReference>
<dbReference type="InterPro" id="IPR011978">
    <property type="entry name" value="YgfB-like"/>
</dbReference>
<dbReference type="InterPro" id="IPR036255">
    <property type="entry name" value="YgfB-like_sf"/>
</dbReference>
<dbReference type="NCBIfam" id="NF002562">
    <property type="entry name" value="PRK02166.1"/>
    <property type="match status" value="1"/>
</dbReference>
<dbReference type="PANTHER" id="PTHR37528">
    <property type="entry name" value="UPF0149 PROTEIN YGFB"/>
    <property type="match status" value="1"/>
</dbReference>
<dbReference type="PANTHER" id="PTHR37528:SF1">
    <property type="entry name" value="UPF0149 PROTEIN YGFB"/>
    <property type="match status" value="1"/>
</dbReference>
<dbReference type="Pfam" id="PF03695">
    <property type="entry name" value="UPF0149"/>
    <property type="match status" value="1"/>
</dbReference>
<dbReference type="SUPFAM" id="SSF101327">
    <property type="entry name" value="YgfB-like"/>
    <property type="match status" value="1"/>
</dbReference>
<accession>Q3K4Y2</accession>